<feature type="chain" id="PRO_0000072007" description="Nitrosoguanidine resistance protein SNG1">
    <location>
        <begin position="1"/>
        <end position="547"/>
    </location>
</feature>
<feature type="transmembrane region" description="Helical" evidence="1">
    <location>
        <begin position="109"/>
        <end position="129"/>
    </location>
</feature>
<feature type="transmembrane region" description="Helical" evidence="1">
    <location>
        <begin position="159"/>
        <end position="179"/>
    </location>
</feature>
<feature type="transmembrane region" description="Helical" evidence="1">
    <location>
        <begin position="318"/>
        <end position="338"/>
    </location>
</feature>
<feature type="transmembrane region" description="Helical" evidence="1">
    <location>
        <begin position="363"/>
        <end position="383"/>
    </location>
</feature>
<feature type="transmembrane region" description="Helical" evidence="1">
    <location>
        <begin position="394"/>
        <end position="414"/>
    </location>
</feature>
<feature type="transmembrane region" description="Helical" evidence="1">
    <location>
        <begin position="418"/>
        <end position="438"/>
    </location>
</feature>
<feature type="transmembrane region" description="Helical" evidence="1">
    <location>
        <begin position="457"/>
        <end position="477"/>
    </location>
</feature>
<feature type="transmembrane region" description="Helical" evidence="1">
    <location>
        <begin position="488"/>
        <end position="508"/>
    </location>
</feature>
<feature type="region of interest" description="Disordered" evidence="2">
    <location>
        <begin position="35"/>
        <end position="86"/>
    </location>
</feature>
<feature type="region of interest" description="Disordered" evidence="2">
    <location>
        <begin position="526"/>
        <end position="547"/>
    </location>
</feature>
<feature type="compositionally biased region" description="Basic and acidic residues" evidence="2">
    <location>
        <begin position="50"/>
        <end position="62"/>
    </location>
</feature>
<feature type="compositionally biased region" description="Low complexity" evidence="2">
    <location>
        <begin position="526"/>
        <end position="536"/>
    </location>
</feature>
<feature type="modified residue" description="Phosphothreonine" evidence="5 6 7">
    <location>
        <position position="91"/>
    </location>
</feature>
<feature type="sequence conflict" description="In Ref. 1; CAA52881." evidence="4" ref="1">
    <original>A</original>
    <variation>V</variation>
    <location>
        <position position="117"/>
    </location>
</feature>
<comment type="function">
    <text>May function as a N-methyl-N'nitro-N-nitrosoguanidine (MNNG) export permease.</text>
</comment>
<comment type="subcellular location">
    <subcellularLocation>
        <location evidence="4">Membrane</location>
        <topology evidence="4">Multi-pass membrane protein</topology>
    </subcellularLocation>
</comment>
<comment type="induction">
    <text evidence="3">Transcriptionally regulated by PDR8.</text>
</comment>
<comment type="similarity">
    <text evidence="4">To yeast YJR015W.</text>
</comment>
<reference key="1">
    <citation type="journal article" date="1995" name="Mutat. Res.">
        <title>SNG1 -- a new gene involved in nitrosoguanidine resistance in Saccharomyces cerevisiae.</title>
        <authorList>
            <person name="Grey M."/>
            <person name="Pich C.T."/>
            <person name="Haase E."/>
            <person name="Brendel M."/>
        </authorList>
    </citation>
    <scope>NUCLEOTIDE SEQUENCE [GENOMIC DNA]</scope>
</reference>
<reference key="2">
    <citation type="journal article" date="1995" name="Yeast">
        <title>The complete sequence of a 9000 bp fragment of the right arm of Saccharomyces cerevisiae chromosome VII contains four previously unknown open reading frames.</title>
        <authorList>
            <person name="Guerreiro P."/>
            <person name="Maia e Silva A."/>
            <person name="Barreiros T."/>
            <person name="Arroyo J."/>
            <person name="Garcia-Gonzalez M."/>
            <person name="Garcia-Saez M.I."/>
            <person name="Rodrigues-Pousada C."/>
            <person name="Nombela C."/>
        </authorList>
    </citation>
    <scope>NUCLEOTIDE SEQUENCE [GENOMIC DNA]</scope>
    <source>
        <strain>ATCC 204508 / S288c</strain>
    </source>
</reference>
<reference key="3">
    <citation type="journal article" date="1997" name="Nature">
        <title>The nucleotide sequence of Saccharomyces cerevisiae chromosome VII.</title>
        <authorList>
            <person name="Tettelin H."/>
            <person name="Agostoni-Carbone M.L."/>
            <person name="Albermann K."/>
            <person name="Albers M."/>
            <person name="Arroyo J."/>
            <person name="Backes U."/>
            <person name="Barreiros T."/>
            <person name="Bertani I."/>
            <person name="Bjourson A.J."/>
            <person name="Brueckner M."/>
            <person name="Bruschi C.V."/>
            <person name="Carignani G."/>
            <person name="Castagnoli L."/>
            <person name="Cerdan E."/>
            <person name="Clemente M.L."/>
            <person name="Coblenz A."/>
            <person name="Coglievina M."/>
            <person name="Coissac E."/>
            <person name="Defoor E."/>
            <person name="Del Bino S."/>
            <person name="Delius H."/>
            <person name="Delneri D."/>
            <person name="de Wergifosse P."/>
            <person name="Dujon B."/>
            <person name="Durand P."/>
            <person name="Entian K.-D."/>
            <person name="Eraso P."/>
            <person name="Escribano V."/>
            <person name="Fabiani L."/>
            <person name="Fartmann B."/>
            <person name="Feroli F."/>
            <person name="Feuermann M."/>
            <person name="Frontali L."/>
            <person name="Garcia-Gonzalez M."/>
            <person name="Garcia-Saez M.I."/>
            <person name="Goffeau A."/>
            <person name="Guerreiro P."/>
            <person name="Hani J."/>
            <person name="Hansen M."/>
            <person name="Hebling U."/>
            <person name="Hernandez K."/>
            <person name="Heumann K."/>
            <person name="Hilger F."/>
            <person name="Hofmann B."/>
            <person name="Indge K.J."/>
            <person name="James C.M."/>
            <person name="Klima R."/>
            <person name="Koetter P."/>
            <person name="Kramer B."/>
            <person name="Kramer W."/>
            <person name="Lauquin G."/>
            <person name="Leuther H."/>
            <person name="Louis E.J."/>
            <person name="Maillier E."/>
            <person name="Marconi A."/>
            <person name="Martegani E."/>
            <person name="Mazon M.J."/>
            <person name="Mazzoni C."/>
            <person name="McReynolds A.D.K."/>
            <person name="Melchioretto P."/>
            <person name="Mewes H.-W."/>
            <person name="Minenkova O."/>
            <person name="Mueller-Auer S."/>
            <person name="Nawrocki A."/>
            <person name="Netter P."/>
            <person name="Neu R."/>
            <person name="Nombela C."/>
            <person name="Oliver S.G."/>
            <person name="Panzeri L."/>
            <person name="Paoluzi S."/>
            <person name="Plevani P."/>
            <person name="Portetelle D."/>
            <person name="Portillo F."/>
            <person name="Potier S."/>
            <person name="Purnelle B."/>
            <person name="Rieger M."/>
            <person name="Riles L."/>
            <person name="Rinaldi T."/>
            <person name="Robben J."/>
            <person name="Rodrigues-Pousada C."/>
            <person name="Rodriguez-Belmonte E."/>
            <person name="Rodriguez-Torres A.M."/>
            <person name="Rose M."/>
            <person name="Ruzzi M."/>
            <person name="Saliola M."/>
            <person name="Sanchez-Perez M."/>
            <person name="Schaefer B."/>
            <person name="Schaefer M."/>
            <person name="Scharfe M."/>
            <person name="Schmidheini T."/>
            <person name="Schreer A."/>
            <person name="Skala J."/>
            <person name="Souciet J.-L."/>
            <person name="Steensma H.Y."/>
            <person name="Talla E."/>
            <person name="Thierry A."/>
            <person name="Vandenbol M."/>
            <person name="van der Aart Q.J.M."/>
            <person name="Van Dyck L."/>
            <person name="Vanoni M."/>
            <person name="Verhasselt P."/>
            <person name="Voet M."/>
            <person name="Volckaert G."/>
            <person name="Wambutt R."/>
            <person name="Watson M.D."/>
            <person name="Weber N."/>
            <person name="Wedler E."/>
            <person name="Wedler H."/>
            <person name="Wipfli P."/>
            <person name="Wolf K."/>
            <person name="Wright L.F."/>
            <person name="Zaccaria P."/>
            <person name="Zimmermann M."/>
            <person name="Zollner A."/>
            <person name="Kleine K."/>
        </authorList>
    </citation>
    <scope>NUCLEOTIDE SEQUENCE [LARGE SCALE GENOMIC DNA]</scope>
    <source>
        <strain>ATCC 204508 / S288c</strain>
    </source>
</reference>
<reference key="4">
    <citation type="journal article" date="2014" name="G3 (Bethesda)">
        <title>The reference genome sequence of Saccharomyces cerevisiae: Then and now.</title>
        <authorList>
            <person name="Engel S.R."/>
            <person name="Dietrich F.S."/>
            <person name="Fisk D.G."/>
            <person name="Binkley G."/>
            <person name="Balakrishnan R."/>
            <person name="Costanzo M.C."/>
            <person name="Dwight S.S."/>
            <person name="Hitz B.C."/>
            <person name="Karra K."/>
            <person name="Nash R.S."/>
            <person name="Weng S."/>
            <person name="Wong E.D."/>
            <person name="Lloyd P."/>
            <person name="Skrzypek M.S."/>
            <person name="Miyasato S.R."/>
            <person name="Simison M."/>
            <person name="Cherry J.M."/>
        </authorList>
    </citation>
    <scope>GENOME REANNOTATION</scope>
    <source>
        <strain>ATCC 204508 / S288c</strain>
    </source>
</reference>
<reference key="5">
    <citation type="journal article" date="2003" name="J. Biol. Chem.">
        <title>A general strategy to uncover transcription factor properties identifies a new regulator of drug resistance in yeast.</title>
        <authorList>
            <person name="Hikkel I."/>
            <person name="Lucau-Danila A."/>
            <person name="Delaveau T."/>
            <person name="Marc P."/>
            <person name="Devaux F."/>
            <person name="Jacq C."/>
        </authorList>
    </citation>
    <scope>INDUCTION</scope>
</reference>
<reference key="6">
    <citation type="journal article" date="2007" name="J. Proteome Res.">
        <title>Large-scale phosphorylation analysis of alpha-factor-arrested Saccharomyces cerevisiae.</title>
        <authorList>
            <person name="Li X."/>
            <person name="Gerber S.A."/>
            <person name="Rudner A.D."/>
            <person name="Beausoleil S.A."/>
            <person name="Haas W."/>
            <person name="Villen J."/>
            <person name="Elias J.E."/>
            <person name="Gygi S.P."/>
        </authorList>
    </citation>
    <scope>PHOSPHORYLATION [LARGE SCALE ANALYSIS] AT THR-91</scope>
    <scope>IDENTIFICATION BY MASS SPECTROMETRY [LARGE SCALE ANALYSIS]</scope>
    <source>
        <strain>ADR376</strain>
    </source>
</reference>
<reference key="7">
    <citation type="journal article" date="2008" name="Mol. Cell. Proteomics">
        <title>A multidimensional chromatography technology for in-depth phosphoproteome analysis.</title>
        <authorList>
            <person name="Albuquerque C.P."/>
            <person name="Smolka M.B."/>
            <person name="Payne S.H."/>
            <person name="Bafna V."/>
            <person name="Eng J."/>
            <person name="Zhou H."/>
        </authorList>
    </citation>
    <scope>PHOSPHORYLATION [LARGE SCALE ANALYSIS] AT THR-91</scope>
    <scope>IDENTIFICATION BY MASS SPECTROMETRY [LARGE SCALE ANALYSIS]</scope>
</reference>
<reference key="8">
    <citation type="journal article" date="2009" name="Science">
        <title>Global analysis of Cdk1 substrate phosphorylation sites provides insights into evolution.</title>
        <authorList>
            <person name="Holt L.J."/>
            <person name="Tuch B.B."/>
            <person name="Villen J."/>
            <person name="Johnson A.D."/>
            <person name="Gygi S.P."/>
            <person name="Morgan D.O."/>
        </authorList>
    </citation>
    <scope>PHOSPHORYLATION [LARGE SCALE ANALYSIS] AT THR-91</scope>
    <scope>IDENTIFICATION BY MASS SPECTROMETRY [LARGE SCALE ANALYSIS]</scope>
</reference>
<dbReference type="EMBL" id="X74920">
    <property type="protein sequence ID" value="CAA52881.1"/>
    <property type="molecule type" value="Genomic_DNA"/>
</dbReference>
<dbReference type="EMBL" id="X82775">
    <property type="protein sequence ID" value="CAA58016.1"/>
    <property type="molecule type" value="Genomic_DNA"/>
</dbReference>
<dbReference type="EMBL" id="Z72982">
    <property type="protein sequence ID" value="CAA97224.1"/>
    <property type="molecule type" value="Genomic_DNA"/>
</dbReference>
<dbReference type="EMBL" id="BK006941">
    <property type="protein sequence ID" value="DAA08290.1"/>
    <property type="molecule type" value="Genomic_DNA"/>
</dbReference>
<dbReference type="PIR" id="S53920">
    <property type="entry name" value="S53920"/>
</dbReference>
<dbReference type="RefSeq" id="NP_011713.1">
    <property type="nucleotide sequence ID" value="NM_001181326.1"/>
</dbReference>
<dbReference type="SMR" id="P46950"/>
<dbReference type="BioGRID" id="33450">
    <property type="interactions" value="234"/>
</dbReference>
<dbReference type="DIP" id="DIP-8148N"/>
<dbReference type="FunCoup" id="P46950">
    <property type="interactions" value="34"/>
</dbReference>
<dbReference type="IntAct" id="P46950">
    <property type="interactions" value="2"/>
</dbReference>
<dbReference type="STRING" id="4932.YGR197C"/>
<dbReference type="iPTMnet" id="P46950"/>
<dbReference type="PaxDb" id="4932-YGR197C"/>
<dbReference type="PeptideAtlas" id="P46950"/>
<dbReference type="EnsemblFungi" id="YGR197C_mRNA">
    <property type="protein sequence ID" value="YGR197C"/>
    <property type="gene ID" value="YGR197C"/>
</dbReference>
<dbReference type="GeneID" id="853111"/>
<dbReference type="KEGG" id="sce:YGR197C"/>
<dbReference type="AGR" id="SGD:S000003429"/>
<dbReference type="SGD" id="S000003429">
    <property type="gene designation" value="SNG1"/>
</dbReference>
<dbReference type="VEuPathDB" id="FungiDB:YGR197C"/>
<dbReference type="eggNOG" id="ENOG502QUA0">
    <property type="taxonomic scope" value="Eukaryota"/>
</dbReference>
<dbReference type="GeneTree" id="ENSGT00940000176467"/>
<dbReference type="HOGENOM" id="CLU_020178_0_1_1"/>
<dbReference type="InParanoid" id="P46950"/>
<dbReference type="OMA" id="PLENMAM"/>
<dbReference type="OrthoDB" id="2140105at2759"/>
<dbReference type="BioCyc" id="YEAST:G3O-30883-MONOMER"/>
<dbReference type="BioGRID-ORCS" id="853111">
    <property type="hits" value="0 hits in 10 CRISPR screens"/>
</dbReference>
<dbReference type="PRO" id="PR:P46950"/>
<dbReference type="Proteomes" id="UP000002311">
    <property type="component" value="Chromosome VII"/>
</dbReference>
<dbReference type="RNAct" id="P46950">
    <property type="molecule type" value="protein"/>
</dbReference>
<dbReference type="GO" id="GO:0071944">
    <property type="term" value="C:cell periphery"/>
    <property type="evidence" value="ECO:0007005"/>
    <property type="project" value="SGD"/>
</dbReference>
<dbReference type="GO" id="GO:0000324">
    <property type="term" value="C:fungal-type vacuole"/>
    <property type="evidence" value="ECO:0007005"/>
    <property type="project" value="SGD"/>
</dbReference>
<dbReference type="GO" id="GO:0016020">
    <property type="term" value="C:membrane"/>
    <property type="evidence" value="ECO:0000318"/>
    <property type="project" value="GO_Central"/>
</dbReference>
<dbReference type="GO" id="GO:0005886">
    <property type="term" value="C:plasma membrane"/>
    <property type="evidence" value="ECO:0000314"/>
    <property type="project" value="SGD"/>
</dbReference>
<dbReference type="GO" id="GO:0015931">
    <property type="term" value="P:nucleobase-containing compound transport"/>
    <property type="evidence" value="ECO:0000315"/>
    <property type="project" value="SGD"/>
</dbReference>
<dbReference type="GO" id="GO:0060237">
    <property type="term" value="P:regulation of fungal-type cell wall organization"/>
    <property type="evidence" value="ECO:0000315"/>
    <property type="project" value="SGD"/>
</dbReference>
<dbReference type="GO" id="GO:0061091">
    <property type="term" value="P:regulation of phospholipid translocation"/>
    <property type="evidence" value="ECO:0000316"/>
    <property type="project" value="SGD"/>
</dbReference>
<dbReference type="InterPro" id="IPR022703">
    <property type="entry name" value="DUF3533"/>
</dbReference>
<dbReference type="InterPro" id="IPR053001">
    <property type="entry name" value="MNNG_permease-like"/>
</dbReference>
<dbReference type="PANTHER" id="PTHR34814">
    <property type="entry name" value="NITROSOGUANIDINE RESISTANCE PROTEIN SNG1"/>
    <property type="match status" value="1"/>
</dbReference>
<dbReference type="PANTHER" id="PTHR34814:SF1">
    <property type="entry name" value="NITROSOGUANIDINE RESISTANCE PROTEIN SNG1"/>
    <property type="match status" value="1"/>
</dbReference>
<dbReference type="Pfam" id="PF12051">
    <property type="entry name" value="DUF3533"/>
    <property type="match status" value="1"/>
</dbReference>
<organism>
    <name type="scientific">Saccharomyces cerevisiae (strain ATCC 204508 / S288c)</name>
    <name type="common">Baker's yeast</name>
    <dbReference type="NCBI Taxonomy" id="559292"/>
    <lineage>
        <taxon>Eukaryota</taxon>
        <taxon>Fungi</taxon>
        <taxon>Dikarya</taxon>
        <taxon>Ascomycota</taxon>
        <taxon>Saccharomycotina</taxon>
        <taxon>Saccharomycetes</taxon>
        <taxon>Saccharomycetales</taxon>
        <taxon>Saccharomycetaceae</taxon>
        <taxon>Saccharomyces</taxon>
    </lineage>
</organism>
<evidence type="ECO:0000255" key="1"/>
<evidence type="ECO:0000256" key="2">
    <source>
        <dbReference type="SAM" id="MobiDB-lite"/>
    </source>
</evidence>
<evidence type="ECO:0000269" key="3">
    <source>
    </source>
</evidence>
<evidence type="ECO:0000305" key="4"/>
<evidence type="ECO:0007744" key="5">
    <source>
    </source>
</evidence>
<evidence type="ECO:0007744" key="6">
    <source>
    </source>
</evidence>
<evidence type="ECO:0007744" key="7">
    <source>
    </source>
</evidence>
<keyword id="KW-0472">Membrane</keyword>
<keyword id="KW-0597">Phosphoprotein</keyword>
<keyword id="KW-1185">Reference proteome</keyword>
<keyword id="KW-0812">Transmembrane</keyword>
<keyword id="KW-1133">Transmembrane helix</keyword>
<proteinExistence type="evidence at protein level"/>
<accession>P46950</accession>
<accession>D6VUX9</accession>
<gene>
    <name type="primary">SNG1</name>
    <name type="ordered locus">YGR197C</name>
    <name type="ORF">G7591</name>
</gene>
<name>SNG1_YEAST</name>
<protein>
    <recommendedName>
        <fullName>Nitrosoguanidine resistance protein SNG1</fullName>
    </recommendedName>
</protein>
<sequence>MTKSVGDEESQYIEDPSFAAAAAFTGGRDGVSYSNQRFAEGSGHSSDLAKSLEDYRPPDEKPSSLSSVGEGGANEEEKGGNDGGPLARIQTGLFSPRLRNHRKKILSKFVLNNFFIACVCVSLISIYWGACYGTDRYFFKVKNIVVLQDAPSNTSVQSISAIIPSLLASVPGTWHIYNATSFHRKFGTTNSTEIDRKIVDLIYDERYWLALNVKPNATDTLYNSLISQDANSEFNSSIFFESVFESGRDPSSVKSTILPLMQQLEVRLQKYYVKEYLPSLMSNITSNDRDLNINMENWAIAGQLLFTYNDYRPFADRILMAPLQVGLIYCILLTVLQLSLYGKLHGEMARVLKPKHILIYRLLISWATYFLLSIGFCTVSAIFRIDFTPAFGRGGFVVYWMSTWLVMMAVGGANENVLSLVIAYCPPYLSIWLMTWIILNISASFYPMVLNNEFYRYGYIMPIHNAVDIYKVIFLNLTKRKMGRNYGILVAWVALNTSLMPFCMKFAGKKMQKNAMQAAEAAVAAATQRASRPAEANTDKNNNPPGN</sequence>